<keyword id="KW-0028">Amino-acid biosynthesis</keyword>
<keyword id="KW-0963">Cytoplasm</keyword>
<keyword id="KW-0368">Histidine biosynthesis</keyword>
<keyword id="KW-0456">Lyase</keyword>
<protein>
    <recommendedName>
        <fullName evidence="1">Imidazoleglycerol-phosphate dehydratase</fullName>
        <shortName evidence="1">IGPD</shortName>
        <ecNumber evidence="1">4.2.1.19</ecNumber>
    </recommendedName>
</protein>
<dbReference type="EC" id="4.2.1.19" evidence="1"/>
<dbReference type="EMBL" id="CP000713">
    <property type="protein sequence ID" value="ABQ93020.1"/>
    <property type="molecule type" value="Genomic_DNA"/>
</dbReference>
<dbReference type="SMR" id="A5WBH9"/>
<dbReference type="STRING" id="349106.PsycPRwf_0060"/>
<dbReference type="KEGG" id="prw:PsycPRwf_0060"/>
<dbReference type="eggNOG" id="COG0131">
    <property type="taxonomic scope" value="Bacteria"/>
</dbReference>
<dbReference type="HOGENOM" id="CLU_044308_3_0_6"/>
<dbReference type="UniPathway" id="UPA00031">
    <property type="reaction ID" value="UER00011"/>
</dbReference>
<dbReference type="GO" id="GO:0005737">
    <property type="term" value="C:cytoplasm"/>
    <property type="evidence" value="ECO:0007669"/>
    <property type="project" value="UniProtKB-SubCell"/>
</dbReference>
<dbReference type="GO" id="GO:0004424">
    <property type="term" value="F:imidazoleglycerol-phosphate dehydratase activity"/>
    <property type="evidence" value="ECO:0007669"/>
    <property type="project" value="UniProtKB-UniRule"/>
</dbReference>
<dbReference type="GO" id="GO:0000105">
    <property type="term" value="P:L-histidine biosynthetic process"/>
    <property type="evidence" value="ECO:0007669"/>
    <property type="project" value="UniProtKB-UniRule"/>
</dbReference>
<dbReference type="CDD" id="cd07914">
    <property type="entry name" value="IGPD"/>
    <property type="match status" value="1"/>
</dbReference>
<dbReference type="FunFam" id="3.30.230.40:FF:000001">
    <property type="entry name" value="Imidazoleglycerol-phosphate dehydratase HisB"/>
    <property type="match status" value="1"/>
</dbReference>
<dbReference type="FunFam" id="3.30.230.40:FF:000003">
    <property type="entry name" value="Imidazoleglycerol-phosphate dehydratase HisB"/>
    <property type="match status" value="1"/>
</dbReference>
<dbReference type="Gene3D" id="3.30.230.40">
    <property type="entry name" value="Imidazole glycerol phosphate dehydratase, domain 1"/>
    <property type="match status" value="2"/>
</dbReference>
<dbReference type="HAMAP" id="MF_00076">
    <property type="entry name" value="HisB"/>
    <property type="match status" value="1"/>
</dbReference>
<dbReference type="InterPro" id="IPR038494">
    <property type="entry name" value="IGPD_sf"/>
</dbReference>
<dbReference type="InterPro" id="IPR000807">
    <property type="entry name" value="ImidazoleglycerolP_deHydtase"/>
</dbReference>
<dbReference type="InterPro" id="IPR020565">
    <property type="entry name" value="ImidazoleglycerP_deHydtase_CS"/>
</dbReference>
<dbReference type="InterPro" id="IPR020568">
    <property type="entry name" value="Ribosomal_Su5_D2-typ_SF"/>
</dbReference>
<dbReference type="NCBIfam" id="NF002106">
    <property type="entry name" value="PRK00951.1-1"/>
    <property type="match status" value="1"/>
</dbReference>
<dbReference type="NCBIfam" id="NF002111">
    <property type="entry name" value="PRK00951.2-1"/>
    <property type="match status" value="1"/>
</dbReference>
<dbReference type="NCBIfam" id="NF002114">
    <property type="entry name" value="PRK00951.2-4"/>
    <property type="match status" value="1"/>
</dbReference>
<dbReference type="PANTHER" id="PTHR23133:SF2">
    <property type="entry name" value="IMIDAZOLEGLYCEROL-PHOSPHATE DEHYDRATASE"/>
    <property type="match status" value="1"/>
</dbReference>
<dbReference type="PANTHER" id="PTHR23133">
    <property type="entry name" value="IMIDAZOLEGLYCEROL-PHOSPHATE DEHYDRATASE HIS7"/>
    <property type="match status" value="1"/>
</dbReference>
<dbReference type="Pfam" id="PF00475">
    <property type="entry name" value="IGPD"/>
    <property type="match status" value="1"/>
</dbReference>
<dbReference type="SUPFAM" id="SSF54211">
    <property type="entry name" value="Ribosomal protein S5 domain 2-like"/>
    <property type="match status" value="2"/>
</dbReference>
<dbReference type="PROSITE" id="PS00954">
    <property type="entry name" value="IGP_DEHYDRATASE_1"/>
    <property type="match status" value="1"/>
</dbReference>
<dbReference type="PROSITE" id="PS00955">
    <property type="entry name" value="IGP_DEHYDRATASE_2"/>
    <property type="match status" value="1"/>
</dbReference>
<proteinExistence type="inferred from homology"/>
<feature type="chain" id="PRO_0000336336" description="Imidazoleglycerol-phosphate dehydratase">
    <location>
        <begin position="1"/>
        <end position="208"/>
    </location>
</feature>
<sequence length="208" mass="23302">MTTEIHSNPANRPNRIASVERNTAETQVSVTVNLDGTGQGKIDTGVPFLDHMLDQIKRHGLFDLDITCKGDTYIDDHHSIEDTGITLGQAFAKALGDKKGIRRYGHFYAPLDESLTRAVVDISGRPGLHMDIPFTRSHVGNFDVDLFSEFFFGFVNHAWMTVHLDNLKGKNSHHQIECTFKAFARALRMACEYDERALNTLPSTKEAL</sequence>
<reference key="1">
    <citation type="submission" date="2007-05" db="EMBL/GenBank/DDBJ databases">
        <title>Complete sequence of chromosome of Psychrobacter sp. PRwf-1.</title>
        <authorList>
            <consortium name="US DOE Joint Genome Institute"/>
            <person name="Copeland A."/>
            <person name="Lucas S."/>
            <person name="Lapidus A."/>
            <person name="Barry K."/>
            <person name="Detter J.C."/>
            <person name="Glavina del Rio T."/>
            <person name="Hammon N."/>
            <person name="Israni S."/>
            <person name="Dalin E."/>
            <person name="Tice H."/>
            <person name="Pitluck S."/>
            <person name="Chain P."/>
            <person name="Malfatti S."/>
            <person name="Shin M."/>
            <person name="Vergez L."/>
            <person name="Schmutz J."/>
            <person name="Larimer F."/>
            <person name="Land M."/>
            <person name="Hauser L."/>
            <person name="Kyrpides N."/>
            <person name="Kim E."/>
            <person name="Tiedje J."/>
            <person name="Richardson P."/>
        </authorList>
    </citation>
    <scope>NUCLEOTIDE SEQUENCE [LARGE SCALE GENOMIC DNA]</scope>
    <source>
        <strain>PRwf-1</strain>
    </source>
</reference>
<comment type="catalytic activity">
    <reaction evidence="1">
        <text>D-erythro-1-(imidazol-4-yl)glycerol 3-phosphate = 3-(imidazol-4-yl)-2-oxopropyl phosphate + H2O</text>
        <dbReference type="Rhea" id="RHEA:11040"/>
        <dbReference type="ChEBI" id="CHEBI:15377"/>
        <dbReference type="ChEBI" id="CHEBI:57766"/>
        <dbReference type="ChEBI" id="CHEBI:58278"/>
        <dbReference type="EC" id="4.2.1.19"/>
    </reaction>
</comment>
<comment type="pathway">
    <text evidence="1">Amino-acid biosynthesis; L-histidine biosynthesis; L-histidine from 5-phospho-alpha-D-ribose 1-diphosphate: step 6/9.</text>
</comment>
<comment type="subcellular location">
    <subcellularLocation>
        <location evidence="1">Cytoplasm</location>
    </subcellularLocation>
</comment>
<comment type="similarity">
    <text evidence="1">Belongs to the imidazoleglycerol-phosphate dehydratase family.</text>
</comment>
<evidence type="ECO:0000255" key="1">
    <source>
        <dbReference type="HAMAP-Rule" id="MF_00076"/>
    </source>
</evidence>
<gene>
    <name evidence="1" type="primary">hisB</name>
    <name type="ordered locus">PsycPRwf_0060</name>
</gene>
<accession>A5WBH9</accession>
<name>HIS7_PSYWF</name>
<organism>
    <name type="scientific">Psychrobacter sp. (strain PRwf-1)</name>
    <dbReference type="NCBI Taxonomy" id="349106"/>
    <lineage>
        <taxon>Bacteria</taxon>
        <taxon>Pseudomonadati</taxon>
        <taxon>Pseudomonadota</taxon>
        <taxon>Gammaproteobacteria</taxon>
        <taxon>Moraxellales</taxon>
        <taxon>Moraxellaceae</taxon>
        <taxon>Psychrobacter</taxon>
    </lineage>
</organism>